<accession>Q18192</accession>
<accession>Q5TYL7</accession>
<accession>Q8MQB8</accession>
<keyword id="KW-0025">Alternative splicing</keyword>
<keyword id="KW-0238">DNA-binding</keyword>
<keyword id="KW-0479">Metal-binding</keyword>
<keyword id="KW-0539">Nucleus</keyword>
<keyword id="KW-0675">Receptor</keyword>
<keyword id="KW-1185">Reference proteome</keyword>
<keyword id="KW-0804">Transcription</keyword>
<keyword id="KW-0805">Transcription regulation</keyword>
<keyword id="KW-0862">Zinc</keyword>
<keyword id="KW-0863">Zinc-finger</keyword>
<proteinExistence type="evidence at transcript level"/>
<evidence type="ECO:0000255" key="1">
    <source>
        <dbReference type="PROSITE-ProRule" id="PRU00407"/>
    </source>
</evidence>
<evidence type="ECO:0000255" key="2">
    <source>
        <dbReference type="PROSITE-ProRule" id="PRU01189"/>
    </source>
</evidence>
<evidence type="ECO:0000256" key="3">
    <source>
        <dbReference type="SAM" id="MobiDB-lite"/>
    </source>
</evidence>
<evidence type="ECO:0000305" key="4"/>
<evidence type="ECO:0000312" key="5">
    <source>
        <dbReference type="WormBase" id="C26B2.3a"/>
    </source>
</evidence>
<evidence type="ECO:0000312" key="6">
    <source>
        <dbReference type="WormBase" id="C26B2.3c"/>
    </source>
</evidence>
<protein>
    <recommendedName>
        <fullName>Nuclear hormone receptor family member nhr-31</fullName>
    </recommendedName>
</protein>
<reference key="1">
    <citation type="journal article" date="2005" name="J. Mol. Evol.">
        <title>Explosive lineage-specific expansion of the orphan nuclear receptor HNF4 in nematodes.</title>
        <authorList>
            <person name="Robinson-Rechavi M."/>
            <person name="Maina C.V."/>
            <person name="Gissendanner C.R."/>
            <person name="Laudet V."/>
            <person name="Sluder A."/>
        </authorList>
    </citation>
    <scope>NUCLEOTIDE SEQUENCE [MRNA] (ISOFORM A)</scope>
</reference>
<reference key="2">
    <citation type="journal article" date="1998" name="Science">
        <title>Genome sequence of the nematode C. elegans: a platform for investigating biology.</title>
        <authorList>
            <consortium name="The C. elegans sequencing consortium"/>
        </authorList>
    </citation>
    <scope>NUCLEOTIDE SEQUENCE [LARGE SCALE GENOMIC DNA]</scope>
    <source>
        <strain>Bristol N2</strain>
    </source>
</reference>
<organism>
    <name type="scientific">Caenorhabditis elegans</name>
    <dbReference type="NCBI Taxonomy" id="6239"/>
    <lineage>
        <taxon>Eukaryota</taxon>
        <taxon>Metazoa</taxon>
        <taxon>Ecdysozoa</taxon>
        <taxon>Nematoda</taxon>
        <taxon>Chromadorea</taxon>
        <taxon>Rhabditida</taxon>
        <taxon>Rhabditina</taxon>
        <taxon>Rhabditomorpha</taxon>
        <taxon>Rhabditoidea</taxon>
        <taxon>Rhabditidae</taxon>
        <taxon>Peloderinae</taxon>
        <taxon>Caenorhabditis</taxon>
    </lineage>
</organism>
<feature type="chain" id="PRO_0000053776" description="Nuclear hormone receptor family member nhr-31">
    <location>
        <begin position="1"/>
        <end position="583"/>
    </location>
</feature>
<feature type="domain" description="NR LBD" evidence="2">
    <location>
        <begin position="195"/>
        <end position="464"/>
    </location>
</feature>
<feature type="DNA-binding region" description="Nuclear receptor" evidence="1">
    <location>
        <begin position="79"/>
        <end position="154"/>
    </location>
</feature>
<feature type="zinc finger region" description="NR C4-type" evidence="1">
    <location>
        <begin position="82"/>
        <end position="102"/>
    </location>
</feature>
<feature type="zinc finger region" description="NR C4-type" evidence="1">
    <location>
        <begin position="118"/>
        <end position="142"/>
    </location>
</feature>
<feature type="region of interest" description="Disordered" evidence="3">
    <location>
        <begin position="43"/>
        <end position="77"/>
    </location>
</feature>
<feature type="compositionally biased region" description="Low complexity" evidence="3">
    <location>
        <begin position="46"/>
        <end position="58"/>
    </location>
</feature>
<feature type="compositionally biased region" description="Polar residues" evidence="3">
    <location>
        <begin position="66"/>
        <end position="77"/>
    </location>
</feature>
<feature type="splice variant" id="VSP_020157" description="In isoform c." evidence="4">
    <location>
        <begin position="1"/>
        <end position="39"/>
    </location>
</feature>
<name>NHR31_CAEEL</name>
<comment type="function">
    <text>Orphan nuclear receptor.</text>
</comment>
<comment type="subcellular location">
    <subcellularLocation>
        <location evidence="1">Nucleus</location>
    </subcellularLocation>
</comment>
<comment type="alternative products">
    <event type="alternative splicing"/>
    <isoform>
        <id>Q18192-1</id>
        <name evidence="5">a</name>
        <sequence type="displayed"/>
    </isoform>
    <isoform>
        <id>Q18192-3</id>
        <name evidence="6">c</name>
        <sequence type="described" ref="VSP_020157"/>
    </isoform>
</comment>
<comment type="similarity">
    <text evidence="4">Belongs to the nuclear hormone receptor family.</text>
</comment>
<gene>
    <name type="primary">nhr-31</name>
    <name type="ORF">C26B2.3</name>
</gene>
<dbReference type="EMBL" id="AF273776">
    <property type="protein sequence ID" value="AAG15125.1"/>
    <property type="molecule type" value="mRNA"/>
</dbReference>
<dbReference type="EMBL" id="FO080616">
    <property type="protein sequence ID" value="CCD65193.1"/>
    <property type="molecule type" value="Genomic_DNA"/>
</dbReference>
<dbReference type="EMBL" id="FO080616">
    <property type="protein sequence ID" value="CCD65195.1"/>
    <property type="molecule type" value="Genomic_DNA"/>
</dbReference>
<dbReference type="PIR" id="T34121">
    <property type="entry name" value="T34121"/>
</dbReference>
<dbReference type="RefSeq" id="NP_001021330.1">
    <property type="nucleotide sequence ID" value="NM_001026159.3"/>
</dbReference>
<dbReference type="RefSeq" id="NP_001379703.1">
    <molecule id="Q18192-3"/>
    <property type="nucleotide sequence ID" value="NM_001392341.1"/>
</dbReference>
<dbReference type="RefSeq" id="NP_741456.1">
    <molecule id="Q18192-1"/>
    <property type="nucleotide sequence ID" value="NM_171391.7"/>
</dbReference>
<dbReference type="SMR" id="Q18192"/>
<dbReference type="BioGRID" id="42714">
    <property type="interactions" value="30"/>
</dbReference>
<dbReference type="DIP" id="DIP-26995N"/>
<dbReference type="FunCoup" id="Q18192">
    <property type="interactions" value="5"/>
</dbReference>
<dbReference type="IntAct" id="Q18192">
    <property type="interactions" value="28"/>
</dbReference>
<dbReference type="STRING" id="6239.C26B2.3a.1"/>
<dbReference type="PaxDb" id="6239-C26B2.3a.1"/>
<dbReference type="PeptideAtlas" id="Q18192"/>
<dbReference type="EnsemblMetazoa" id="C26B2.3a.1">
    <molecule id="Q18192-1"/>
    <property type="protein sequence ID" value="C26B2.3a.1"/>
    <property type="gene ID" value="WBGene00003625"/>
</dbReference>
<dbReference type="EnsemblMetazoa" id="C26B2.3a.2">
    <molecule id="Q18192-1"/>
    <property type="protein sequence ID" value="C26B2.3a.2"/>
    <property type="gene ID" value="WBGene00003625"/>
</dbReference>
<dbReference type="EnsemblMetazoa" id="C26B2.3c.1">
    <molecule id="Q18192-3"/>
    <property type="protein sequence ID" value="C26B2.3c.1"/>
    <property type="gene ID" value="WBGene00003625"/>
</dbReference>
<dbReference type="GeneID" id="177601"/>
<dbReference type="KEGG" id="cel:CELE_C26B2.3"/>
<dbReference type="UCSC" id="C26B2.3a.1">
    <molecule id="Q18192-1"/>
    <property type="organism name" value="c. elegans"/>
</dbReference>
<dbReference type="AGR" id="WB:WBGene00003625"/>
<dbReference type="CTD" id="177601"/>
<dbReference type="WormBase" id="C26B2.3a">
    <molecule id="Q18192-1"/>
    <property type="protein sequence ID" value="CE17474"/>
    <property type="gene ID" value="WBGene00003625"/>
    <property type="gene designation" value="nhr-31"/>
</dbReference>
<dbReference type="WormBase" id="C26B2.3c">
    <molecule id="Q18192-3"/>
    <property type="protein sequence ID" value="CE37709"/>
    <property type="gene ID" value="WBGene00003625"/>
    <property type="gene designation" value="nhr-31"/>
</dbReference>
<dbReference type="eggNOG" id="KOG3575">
    <property type="taxonomic scope" value="Eukaryota"/>
</dbReference>
<dbReference type="GeneTree" id="ENSGT00940000153391"/>
<dbReference type="InParanoid" id="Q18192"/>
<dbReference type="OMA" id="KYQRNSC"/>
<dbReference type="OrthoDB" id="5873264at2759"/>
<dbReference type="PhylomeDB" id="Q18192"/>
<dbReference type="PRO" id="PR:Q18192"/>
<dbReference type="Proteomes" id="UP000001940">
    <property type="component" value="Chromosome IV"/>
</dbReference>
<dbReference type="Bgee" id="WBGene00003625">
    <property type="expression patterns" value="Expressed in larva and 4 other cell types or tissues"/>
</dbReference>
<dbReference type="GO" id="GO:0005634">
    <property type="term" value="C:nucleus"/>
    <property type="evidence" value="ECO:0007669"/>
    <property type="project" value="UniProtKB-SubCell"/>
</dbReference>
<dbReference type="GO" id="GO:0003700">
    <property type="term" value="F:DNA-binding transcription factor activity"/>
    <property type="evidence" value="ECO:0007669"/>
    <property type="project" value="InterPro"/>
</dbReference>
<dbReference type="GO" id="GO:0000978">
    <property type="term" value="F:RNA polymerase II cis-regulatory region sequence-specific DNA binding"/>
    <property type="evidence" value="ECO:0007669"/>
    <property type="project" value="InterPro"/>
</dbReference>
<dbReference type="GO" id="GO:0008270">
    <property type="term" value="F:zinc ion binding"/>
    <property type="evidence" value="ECO:0007669"/>
    <property type="project" value="UniProtKB-KW"/>
</dbReference>
<dbReference type="GO" id="GO:0009792">
    <property type="term" value="P:embryo development ending in birth or egg hatching"/>
    <property type="evidence" value="ECO:0000315"/>
    <property type="project" value="WormBase"/>
</dbReference>
<dbReference type="GO" id="GO:0009886">
    <property type="term" value="P:post-embryonic animal morphogenesis"/>
    <property type="evidence" value="ECO:0000315"/>
    <property type="project" value="WormBase"/>
</dbReference>
<dbReference type="GO" id="GO:0006970">
    <property type="term" value="P:response to osmotic stress"/>
    <property type="evidence" value="ECO:0000315"/>
    <property type="project" value="WormBase"/>
</dbReference>
<dbReference type="CDD" id="cd06960">
    <property type="entry name" value="NR_DBD_HNF4A"/>
    <property type="match status" value="1"/>
</dbReference>
<dbReference type="CDD" id="cd06157">
    <property type="entry name" value="NR_LBD"/>
    <property type="match status" value="1"/>
</dbReference>
<dbReference type="FunFam" id="3.30.50.10:FF:000030">
    <property type="entry name" value="Nuclear Hormone Receptor family"/>
    <property type="match status" value="1"/>
</dbReference>
<dbReference type="Gene3D" id="3.30.50.10">
    <property type="entry name" value="Erythroid Transcription Factor GATA-1, subunit A"/>
    <property type="match status" value="1"/>
</dbReference>
<dbReference type="Gene3D" id="1.10.565.10">
    <property type="entry name" value="Retinoid X Receptor"/>
    <property type="match status" value="1"/>
</dbReference>
<dbReference type="InterPro" id="IPR049636">
    <property type="entry name" value="HNF4-like_DBD"/>
</dbReference>
<dbReference type="InterPro" id="IPR035500">
    <property type="entry name" value="NHR-like_dom_sf"/>
</dbReference>
<dbReference type="InterPro" id="IPR000536">
    <property type="entry name" value="Nucl_hrmn_rcpt_lig-bd"/>
</dbReference>
<dbReference type="InterPro" id="IPR001723">
    <property type="entry name" value="Nuclear_hrmn_rcpt"/>
</dbReference>
<dbReference type="InterPro" id="IPR052496">
    <property type="entry name" value="Orphan_Nuclear_Rcpt"/>
</dbReference>
<dbReference type="InterPro" id="IPR001628">
    <property type="entry name" value="Znf_hrmn_rcpt"/>
</dbReference>
<dbReference type="InterPro" id="IPR013088">
    <property type="entry name" value="Znf_NHR/GATA"/>
</dbReference>
<dbReference type="PANTHER" id="PTHR47519:SF1">
    <property type="entry name" value="NUCLEAR HORMONE RECEPTOR FAMILY MEMBER NHR-31"/>
    <property type="match status" value="1"/>
</dbReference>
<dbReference type="PANTHER" id="PTHR47519">
    <property type="entry name" value="NUCLEAR HORMONE RECEPTOR FAMILY MEMBER NHR-31-RELATED"/>
    <property type="match status" value="1"/>
</dbReference>
<dbReference type="Pfam" id="PF00104">
    <property type="entry name" value="Hormone_recep"/>
    <property type="match status" value="1"/>
</dbReference>
<dbReference type="Pfam" id="PF00105">
    <property type="entry name" value="zf-C4"/>
    <property type="match status" value="1"/>
</dbReference>
<dbReference type="PRINTS" id="PR00398">
    <property type="entry name" value="STRDHORMONER"/>
</dbReference>
<dbReference type="PRINTS" id="PR00047">
    <property type="entry name" value="STROIDFINGER"/>
</dbReference>
<dbReference type="SMART" id="SM00430">
    <property type="entry name" value="HOLI"/>
    <property type="match status" value="1"/>
</dbReference>
<dbReference type="SMART" id="SM00399">
    <property type="entry name" value="ZnF_C4"/>
    <property type="match status" value="1"/>
</dbReference>
<dbReference type="SUPFAM" id="SSF57716">
    <property type="entry name" value="Glucocorticoid receptor-like (DNA-binding domain)"/>
    <property type="match status" value="1"/>
</dbReference>
<dbReference type="SUPFAM" id="SSF48508">
    <property type="entry name" value="Nuclear receptor ligand-binding domain"/>
    <property type="match status" value="1"/>
</dbReference>
<dbReference type="PROSITE" id="PS51843">
    <property type="entry name" value="NR_LBD"/>
    <property type="match status" value="1"/>
</dbReference>
<dbReference type="PROSITE" id="PS00031">
    <property type="entry name" value="NUCLEAR_REC_DBD_1"/>
    <property type="match status" value="1"/>
</dbReference>
<dbReference type="PROSITE" id="PS51030">
    <property type="entry name" value="NUCLEAR_REC_DBD_2"/>
    <property type="match status" value="1"/>
</dbReference>
<sequence>MEQLDVEDWEYWGDEYLEEEPTYAIRPGTRVVKVERVPMMRGDLRTSGATSSSGPATSYIIRPSDKQPTVSSGGSQNGDSVCAVCGDGIAKLHYGVLACYGCKGFFRRTLTGKYRYACRFSNNCIVDKFQRNSCRYCRFQRCIQAGMDPKAVRPDRDQTGKQKVPRIKKKQIDEELLNHMMRLQGDDWSRKLPVETRILLMQLMSIEDKVVKGDNNMSAQNTAKDPKSISLREMFESKPALDGRRMEIGYEPFRMARTEELGVIAHRRAIAAVDWVDSLTEIADAVDTEDKVALVKSCYSPLTIFNFSARTAQNTKNPDILCLCSHSFVPRRLPPEFNETNHLSNFLIDRTLNELVAPLRKLNLKEEEIVPLKAIIILNPNAKGLSEHARHAISELRDKVQDMLFQIVKELHPIYSASSRFGNLLLLLPTITTLSGLMSENMHFCQALGGRASGDNLLAEMFGDRTFDDQLISSSISPPLFENPAEICLESISPPMSDRRFVRRVDVATQTNDDLLSSGPYLPHSNSCSSMLNAGYSPPMLSTSPFPLLDDNDSAFQNDISLTELNGCEEFFSQLMDQPIIDS</sequence>